<sequence length="182" mass="20079">METTAFNTTSRIGNWSSAISPPLQTCGSFKCQLPTRRGVIVADLRNSNFRWRKATTTSRGNVAAEAVKIPTSVPVRVARELAQAGYRYLDVRTPDEFSIGHPTRAINVPYMYRVGSGMVKNPSFLRQVSSHFRKHDEIIIGCESGQMSFMASTDLLTAGFTAITDIAGGYVAWTENELPVEE</sequence>
<comment type="subcellular location">
    <subcellularLocation>
        <location evidence="3">Plastid</location>
        <location evidence="3">Chloroplast</location>
    </subcellularLocation>
    <subcellularLocation>
        <location evidence="3">Thylakoid</location>
    </subcellularLocation>
    <text>Associated with membrane.</text>
</comment>
<comment type="alternative products">
    <event type="alternative splicing"/>
    <isoform>
        <id>Q38853-1</id>
        <name>1</name>
        <sequence type="displayed"/>
    </isoform>
    <isoform>
        <id>Q38853-2</id>
        <name>2</name>
        <sequence type="described" ref="VSP_042635 VSP_042636"/>
    </isoform>
</comment>
<comment type="induction">
    <text evidence="2 4 5 6 7">By senescence, dark, sucrose starvation, 3-O-methylglucose, salicylic acid, methyl jasmonate, methyl viologen and infection by the pathogens A.brassicicola and P.syringae pv. tomato.</text>
</comment>
<organism>
    <name type="scientific">Arabidopsis thaliana</name>
    <name type="common">Mouse-ear cress</name>
    <dbReference type="NCBI Taxonomy" id="3702"/>
    <lineage>
        <taxon>Eukaryota</taxon>
        <taxon>Viridiplantae</taxon>
        <taxon>Streptophyta</taxon>
        <taxon>Embryophyta</taxon>
        <taxon>Tracheophyta</taxon>
        <taxon>Spermatophyta</taxon>
        <taxon>Magnoliopsida</taxon>
        <taxon>eudicotyledons</taxon>
        <taxon>Gunneridae</taxon>
        <taxon>Pentapetalae</taxon>
        <taxon>rosids</taxon>
        <taxon>malvids</taxon>
        <taxon>Brassicales</taxon>
        <taxon>Brassicaceae</taxon>
        <taxon>Camelineae</taxon>
        <taxon>Arabidopsis</taxon>
    </lineage>
</organism>
<name>STR15_ARATH</name>
<feature type="transit peptide" description="Chloroplast" evidence="8">
    <location>
        <begin position="1"/>
        <end position="65"/>
    </location>
</feature>
<feature type="chain" id="PRO_0000416536" description="Rhodanese-like domain-containing protein 15, chloroplastic">
    <location>
        <begin position="66"/>
        <end position="182"/>
    </location>
</feature>
<feature type="domain" description="Rhodanese" evidence="1">
    <location>
        <begin position="82"/>
        <end position="182"/>
    </location>
</feature>
<feature type="active site" description="Cysteine persulfide intermediate" evidence="1">
    <location>
        <position position="142"/>
    </location>
</feature>
<feature type="splice variant" id="VSP_042635" description="In isoform 2." evidence="8">
    <original>GFT</original>
    <variation>VCV</variation>
    <location>
        <begin position="159"/>
        <end position="161"/>
    </location>
</feature>
<feature type="splice variant" id="VSP_042636" description="In isoform 2." evidence="8">
    <location>
        <begin position="162"/>
        <end position="182"/>
    </location>
</feature>
<feature type="sequence conflict" description="In Ref. 5; AAM61743." evidence="8" ref="5">
    <original>F</original>
    <variation>Y</variation>
    <location>
        <position position="6"/>
    </location>
</feature>
<feature type="sequence conflict" description="In Ref. 1; AAA80302." evidence="8" ref="1">
    <original>EL</original>
    <variation>DV</variation>
    <location>
        <begin position="80"/>
        <end position="81"/>
    </location>
</feature>
<protein>
    <recommendedName>
        <fullName>Rhodanese-like domain-containing protein 15, chloroplastic</fullName>
    </recommendedName>
    <alternativeName>
        <fullName>Protein DARK INDUCIBLE 1</fullName>
    </alternativeName>
    <alternativeName>
        <fullName>Senescence-associated protein 1</fullName>
        <shortName>AtSEN1</shortName>
    </alternativeName>
    <alternativeName>
        <fullName>Sulfurtransferase 15</fullName>
        <shortName>AtStr15</shortName>
    </alternativeName>
</protein>
<accession>Q38853</accession>
<accession>F4JNT6</accession>
<accession>Q38852</accession>
<accession>Q8LEW3</accession>
<gene>
    <name type="primary">STR15</name>
    <name type="synonym">DIN1</name>
    <name type="synonym">SEN1</name>
    <name type="ordered locus">At4g35770</name>
    <name type="ORF">F4B14.3</name>
    <name type="ORF">F8D20.280</name>
</gene>
<dbReference type="EMBL" id="U26944">
    <property type="protein sequence ID" value="AAA80302.1"/>
    <property type="molecule type" value="Genomic_DNA"/>
</dbReference>
<dbReference type="EMBL" id="U26945">
    <property type="protein sequence ID" value="AAA80303.1"/>
    <property type="molecule type" value="mRNA"/>
</dbReference>
<dbReference type="EMBL" id="AL031135">
    <property type="protein sequence ID" value="CAA20047.1"/>
    <property type="molecule type" value="Genomic_DNA"/>
</dbReference>
<dbReference type="EMBL" id="AL161588">
    <property type="protein sequence ID" value="CAB81486.1"/>
    <property type="molecule type" value="Genomic_DNA"/>
</dbReference>
<dbReference type="EMBL" id="CP002687">
    <property type="protein sequence ID" value="AEE86560.1"/>
    <property type="molecule type" value="Genomic_DNA"/>
</dbReference>
<dbReference type="EMBL" id="CP002687">
    <property type="protein sequence ID" value="AEE86561.1"/>
    <property type="molecule type" value="Genomic_DNA"/>
</dbReference>
<dbReference type="EMBL" id="AY078973">
    <property type="protein sequence ID" value="AAL79579.1"/>
    <property type="molecule type" value="mRNA"/>
</dbReference>
<dbReference type="EMBL" id="AY091671">
    <property type="protein sequence ID" value="AAM10270.1"/>
    <property type="molecule type" value="mRNA"/>
</dbReference>
<dbReference type="EMBL" id="AY085192">
    <property type="protein sequence ID" value="AAM61743.1"/>
    <property type="molecule type" value="mRNA"/>
</dbReference>
<dbReference type="PIR" id="T04682">
    <property type="entry name" value="T04682"/>
</dbReference>
<dbReference type="RefSeq" id="NP_001078496.1">
    <molecule id="Q38853-2"/>
    <property type="nucleotide sequence ID" value="NM_001085027.2"/>
</dbReference>
<dbReference type="RefSeq" id="NP_195302.1">
    <molecule id="Q38853-1"/>
    <property type="nucleotide sequence ID" value="NM_119743.4"/>
</dbReference>
<dbReference type="SMR" id="Q38853"/>
<dbReference type="BioGRID" id="15012">
    <property type="interactions" value="6"/>
</dbReference>
<dbReference type="FunCoup" id="Q38853">
    <property type="interactions" value="235"/>
</dbReference>
<dbReference type="IntAct" id="Q38853">
    <property type="interactions" value="2"/>
</dbReference>
<dbReference type="STRING" id="3702.Q38853"/>
<dbReference type="iPTMnet" id="Q38853"/>
<dbReference type="PaxDb" id="3702-AT4G35770.1"/>
<dbReference type="EnsemblPlants" id="AT4G35770.1">
    <molecule id="Q38853-1"/>
    <property type="protein sequence ID" value="AT4G35770.1"/>
    <property type="gene ID" value="AT4G35770"/>
</dbReference>
<dbReference type="EnsemblPlants" id="AT4G35770.2">
    <molecule id="Q38853-2"/>
    <property type="protein sequence ID" value="AT4G35770.2"/>
    <property type="gene ID" value="AT4G35770"/>
</dbReference>
<dbReference type="GeneID" id="829730"/>
<dbReference type="Gramene" id="AT4G35770.1">
    <molecule id="Q38853-1"/>
    <property type="protein sequence ID" value="AT4G35770.1"/>
    <property type="gene ID" value="AT4G35770"/>
</dbReference>
<dbReference type="Gramene" id="AT4G35770.2">
    <molecule id="Q38853-2"/>
    <property type="protein sequence ID" value="AT4G35770.2"/>
    <property type="gene ID" value="AT4G35770"/>
</dbReference>
<dbReference type="KEGG" id="ath:AT4G35770"/>
<dbReference type="Araport" id="AT4G35770"/>
<dbReference type="TAIR" id="AT4G35770">
    <property type="gene designation" value="SEN1"/>
</dbReference>
<dbReference type="eggNOG" id="KOG1530">
    <property type="taxonomic scope" value="Eukaryota"/>
</dbReference>
<dbReference type="HOGENOM" id="CLU_089574_3_0_1"/>
<dbReference type="InParanoid" id="Q38853"/>
<dbReference type="OMA" id="PIRCRLN"/>
<dbReference type="OrthoDB" id="566238at2759"/>
<dbReference type="PhylomeDB" id="Q38853"/>
<dbReference type="BRENDA" id="2.8.1.1">
    <property type="organism ID" value="399"/>
</dbReference>
<dbReference type="PRO" id="PR:Q38853"/>
<dbReference type="Proteomes" id="UP000006548">
    <property type="component" value="Chromosome 4"/>
</dbReference>
<dbReference type="ExpressionAtlas" id="Q38853">
    <property type="expression patterns" value="baseline and differential"/>
</dbReference>
<dbReference type="GO" id="GO:0009507">
    <property type="term" value="C:chloroplast"/>
    <property type="evidence" value="ECO:0000314"/>
    <property type="project" value="UniProtKB"/>
</dbReference>
<dbReference type="GO" id="GO:0009579">
    <property type="term" value="C:thylakoid"/>
    <property type="evidence" value="ECO:0007669"/>
    <property type="project" value="UniProtKB-SubCell"/>
</dbReference>
<dbReference type="GO" id="GO:0009753">
    <property type="term" value="P:response to jasmonic acid"/>
    <property type="evidence" value="ECO:0000270"/>
    <property type="project" value="TAIR"/>
</dbReference>
<dbReference type="GO" id="GO:0006979">
    <property type="term" value="P:response to oxidative stress"/>
    <property type="evidence" value="ECO:0000270"/>
    <property type="project" value="TAIR"/>
</dbReference>
<dbReference type="GO" id="GO:0009611">
    <property type="term" value="P:response to wounding"/>
    <property type="evidence" value="ECO:0000270"/>
    <property type="project" value="TAIR"/>
</dbReference>
<dbReference type="CDD" id="cd00158">
    <property type="entry name" value="RHOD"/>
    <property type="match status" value="1"/>
</dbReference>
<dbReference type="FunFam" id="3.40.250.10:FF:000062">
    <property type="entry name" value="Thiosulfate sulfurtransferase 16, chloroplastic"/>
    <property type="match status" value="1"/>
</dbReference>
<dbReference type="Gene3D" id="3.40.250.10">
    <property type="entry name" value="Rhodanese-like domain"/>
    <property type="match status" value="1"/>
</dbReference>
<dbReference type="InterPro" id="IPR001763">
    <property type="entry name" value="Rhodanese-like_dom"/>
</dbReference>
<dbReference type="InterPro" id="IPR036873">
    <property type="entry name" value="Rhodanese-like_dom_sf"/>
</dbReference>
<dbReference type="InterPro" id="IPR052367">
    <property type="entry name" value="Thiosulfate_ST/Rhodanese-like"/>
</dbReference>
<dbReference type="PANTHER" id="PTHR45431">
    <property type="entry name" value="RHODANESE-LIKE DOMAIN-CONTAINING PROTEIN 15, CHLOROPLASTIC"/>
    <property type="match status" value="1"/>
</dbReference>
<dbReference type="PANTHER" id="PTHR45431:SF3">
    <property type="entry name" value="RHODANESE-LIKE DOMAIN-CONTAINING PROTEIN 15, CHLOROPLASTIC"/>
    <property type="match status" value="1"/>
</dbReference>
<dbReference type="Pfam" id="PF00581">
    <property type="entry name" value="Rhodanese"/>
    <property type="match status" value="1"/>
</dbReference>
<dbReference type="SMART" id="SM00450">
    <property type="entry name" value="RHOD"/>
    <property type="match status" value="1"/>
</dbReference>
<dbReference type="SUPFAM" id="SSF52821">
    <property type="entry name" value="Rhodanese/Cell cycle control phosphatase"/>
    <property type="match status" value="1"/>
</dbReference>
<dbReference type="PROSITE" id="PS50206">
    <property type="entry name" value="RHODANESE_3"/>
    <property type="match status" value="1"/>
</dbReference>
<reference key="1">
    <citation type="journal article" date="1996" name="Plant Mol. Biol.">
        <title>A senescence-associated gene of Arabidopsis thaliana is distinctively regulated during natural and artificially induced leaf senescence.</title>
        <authorList>
            <person name="Oh S.A."/>
            <person name="Lee S.Y."/>
            <person name="Chung I.K."/>
            <person name="Lee C.H."/>
            <person name="Nam H.G."/>
        </authorList>
    </citation>
    <scope>NUCLEOTIDE SEQUENCE [GENOMIC DNA / MRNA] (ISOFORM 1)</scope>
    <scope>INDUCTION</scope>
</reference>
<reference key="2">
    <citation type="journal article" date="1999" name="Nature">
        <title>Sequence and analysis of chromosome 4 of the plant Arabidopsis thaliana.</title>
        <authorList>
            <person name="Mayer K.F.X."/>
            <person name="Schueller C."/>
            <person name="Wambutt R."/>
            <person name="Murphy G."/>
            <person name="Volckaert G."/>
            <person name="Pohl T."/>
            <person name="Duesterhoeft A."/>
            <person name="Stiekema W."/>
            <person name="Entian K.-D."/>
            <person name="Terryn N."/>
            <person name="Harris B."/>
            <person name="Ansorge W."/>
            <person name="Brandt P."/>
            <person name="Grivell L.A."/>
            <person name="Rieger M."/>
            <person name="Weichselgartner M."/>
            <person name="de Simone V."/>
            <person name="Obermaier B."/>
            <person name="Mache R."/>
            <person name="Mueller M."/>
            <person name="Kreis M."/>
            <person name="Delseny M."/>
            <person name="Puigdomenech P."/>
            <person name="Watson M."/>
            <person name="Schmidtheini T."/>
            <person name="Reichert B."/>
            <person name="Portetelle D."/>
            <person name="Perez-Alonso M."/>
            <person name="Boutry M."/>
            <person name="Bancroft I."/>
            <person name="Vos P."/>
            <person name="Hoheisel J."/>
            <person name="Zimmermann W."/>
            <person name="Wedler H."/>
            <person name="Ridley P."/>
            <person name="Langham S.-A."/>
            <person name="McCullagh B."/>
            <person name="Bilham L."/>
            <person name="Robben J."/>
            <person name="van der Schueren J."/>
            <person name="Grymonprez B."/>
            <person name="Chuang Y.-J."/>
            <person name="Vandenbussche F."/>
            <person name="Braeken M."/>
            <person name="Weltjens I."/>
            <person name="Voet M."/>
            <person name="Bastiaens I."/>
            <person name="Aert R."/>
            <person name="Defoor E."/>
            <person name="Weitzenegger T."/>
            <person name="Bothe G."/>
            <person name="Ramsperger U."/>
            <person name="Hilbert H."/>
            <person name="Braun M."/>
            <person name="Holzer E."/>
            <person name="Brandt A."/>
            <person name="Peters S."/>
            <person name="van Staveren M."/>
            <person name="Dirkse W."/>
            <person name="Mooijman P."/>
            <person name="Klein Lankhorst R."/>
            <person name="Rose M."/>
            <person name="Hauf J."/>
            <person name="Koetter P."/>
            <person name="Berneiser S."/>
            <person name="Hempel S."/>
            <person name="Feldpausch M."/>
            <person name="Lamberth S."/>
            <person name="Van den Daele H."/>
            <person name="De Keyser A."/>
            <person name="Buysshaert C."/>
            <person name="Gielen J."/>
            <person name="Villarroel R."/>
            <person name="De Clercq R."/>
            <person name="van Montagu M."/>
            <person name="Rogers J."/>
            <person name="Cronin A."/>
            <person name="Quail M.A."/>
            <person name="Bray-Allen S."/>
            <person name="Clark L."/>
            <person name="Doggett J."/>
            <person name="Hall S."/>
            <person name="Kay M."/>
            <person name="Lennard N."/>
            <person name="McLay K."/>
            <person name="Mayes R."/>
            <person name="Pettett A."/>
            <person name="Rajandream M.A."/>
            <person name="Lyne M."/>
            <person name="Benes V."/>
            <person name="Rechmann S."/>
            <person name="Borkova D."/>
            <person name="Bloecker H."/>
            <person name="Scharfe M."/>
            <person name="Grimm M."/>
            <person name="Loehnert T.-H."/>
            <person name="Dose S."/>
            <person name="de Haan M."/>
            <person name="Maarse A.C."/>
            <person name="Schaefer M."/>
            <person name="Mueller-Auer S."/>
            <person name="Gabel C."/>
            <person name="Fuchs M."/>
            <person name="Fartmann B."/>
            <person name="Granderath K."/>
            <person name="Dauner D."/>
            <person name="Herzl A."/>
            <person name="Neumann S."/>
            <person name="Argiriou A."/>
            <person name="Vitale D."/>
            <person name="Liguori R."/>
            <person name="Piravandi E."/>
            <person name="Massenet O."/>
            <person name="Quigley F."/>
            <person name="Clabauld G."/>
            <person name="Muendlein A."/>
            <person name="Felber R."/>
            <person name="Schnabl S."/>
            <person name="Hiller R."/>
            <person name="Schmidt W."/>
            <person name="Lecharny A."/>
            <person name="Aubourg S."/>
            <person name="Chefdor F."/>
            <person name="Cooke R."/>
            <person name="Berger C."/>
            <person name="Monfort A."/>
            <person name="Casacuberta E."/>
            <person name="Gibbons T."/>
            <person name="Weber N."/>
            <person name="Vandenbol M."/>
            <person name="Bargues M."/>
            <person name="Terol J."/>
            <person name="Torres A."/>
            <person name="Perez-Perez A."/>
            <person name="Purnelle B."/>
            <person name="Bent E."/>
            <person name="Johnson S."/>
            <person name="Tacon D."/>
            <person name="Jesse T."/>
            <person name="Heijnen L."/>
            <person name="Schwarz S."/>
            <person name="Scholler P."/>
            <person name="Heber S."/>
            <person name="Francs P."/>
            <person name="Bielke C."/>
            <person name="Frishman D."/>
            <person name="Haase D."/>
            <person name="Lemcke K."/>
            <person name="Mewes H.-W."/>
            <person name="Stocker S."/>
            <person name="Zaccaria P."/>
            <person name="Bevan M."/>
            <person name="Wilson R.K."/>
            <person name="de la Bastide M."/>
            <person name="Habermann K."/>
            <person name="Parnell L."/>
            <person name="Dedhia N."/>
            <person name="Gnoj L."/>
            <person name="Schutz K."/>
            <person name="Huang E."/>
            <person name="Spiegel L."/>
            <person name="Sekhon M."/>
            <person name="Murray J."/>
            <person name="Sheet P."/>
            <person name="Cordes M."/>
            <person name="Abu-Threideh J."/>
            <person name="Stoneking T."/>
            <person name="Kalicki J."/>
            <person name="Graves T."/>
            <person name="Harmon G."/>
            <person name="Edwards J."/>
            <person name="Latreille P."/>
            <person name="Courtney L."/>
            <person name="Cloud J."/>
            <person name="Abbott A."/>
            <person name="Scott K."/>
            <person name="Johnson D."/>
            <person name="Minx P."/>
            <person name="Bentley D."/>
            <person name="Fulton B."/>
            <person name="Miller N."/>
            <person name="Greco T."/>
            <person name="Kemp K."/>
            <person name="Kramer J."/>
            <person name="Fulton L."/>
            <person name="Mardis E."/>
            <person name="Dante M."/>
            <person name="Pepin K."/>
            <person name="Hillier L.W."/>
            <person name="Nelson J."/>
            <person name="Spieth J."/>
            <person name="Ryan E."/>
            <person name="Andrews S."/>
            <person name="Geisel C."/>
            <person name="Layman D."/>
            <person name="Du H."/>
            <person name="Ali J."/>
            <person name="Berghoff A."/>
            <person name="Jones K."/>
            <person name="Drone K."/>
            <person name="Cotton M."/>
            <person name="Joshu C."/>
            <person name="Antonoiu B."/>
            <person name="Zidanic M."/>
            <person name="Strong C."/>
            <person name="Sun H."/>
            <person name="Lamar B."/>
            <person name="Yordan C."/>
            <person name="Ma P."/>
            <person name="Zhong J."/>
            <person name="Preston R."/>
            <person name="Vil D."/>
            <person name="Shekher M."/>
            <person name="Matero A."/>
            <person name="Shah R."/>
            <person name="Swaby I.K."/>
            <person name="O'Shaughnessy A."/>
            <person name="Rodriguez M."/>
            <person name="Hoffman J."/>
            <person name="Till S."/>
            <person name="Granat S."/>
            <person name="Shohdy N."/>
            <person name="Hasegawa A."/>
            <person name="Hameed A."/>
            <person name="Lodhi M."/>
            <person name="Johnson A."/>
            <person name="Chen E."/>
            <person name="Marra M.A."/>
            <person name="Martienssen R."/>
            <person name="McCombie W.R."/>
        </authorList>
    </citation>
    <scope>NUCLEOTIDE SEQUENCE [LARGE SCALE GENOMIC DNA]</scope>
    <source>
        <strain>cv. Columbia</strain>
    </source>
</reference>
<reference key="3">
    <citation type="journal article" date="2017" name="Plant J.">
        <title>Araport11: a complete reannotation of the Arabidopsis thaliana reference genome.</title>
        <authorList>
            <person name="Cheng C.Y."/>
            <person name="Krishnakumar V."/>
            <person name="Chan A.P."/>
            <person name="Thibaud-Nissen F."/>
            <person name="Schobel S."/>
            <person name="Town C.D."/>
        </authorList>
    </citation>
    <scope>GENOME REANNOTATION</scope>
    <source>
        <strain>cv. Columbia</strain>
    </source>
</reference>
<reference key="4">
    <citation type="journal article" date="2003" name="Science">
        <title>Empirical analysis of transcriptional activity in the Arabidopsis genome.</title>
        <authorList>
            <person name="Yamada K."/>
            <person name="Lim J."/>
            <person name="Dale J.M."/>
            <person name="Chen H."/>
            <person name="Shinn P."/>
            <person name="Palm C.J."/>
            <person name="Southwick A.M."/>
            <person name="Wu H.C."/>
            <person name="Kim C.J."/>
            <person name="Nguyen M."/>
            <person name="Pham P.K."/>
            <person name="Cheuk R.F."/>
            <person name="Karlin-Newmann G."/>
            <person name="Liu S.X."/>
            <person name="Lam B."/>
            <person name="Sakano H."/>
            <person name="Wu T."/>
            <person name="Yu G."/>
            <person name="Miranda M."/>
            <person name="Quach H.L."/>
            <person name="Tripp M."/>
            <person name="Chang C.H."/>
            <person name="Lee J.M."/>
            <person name="Toriumi M.J."/>
            <person name="Chan M.M."/>
            <person name="Tang C.C."/>
            <person name="Onodera C.S."/>
            <person name="Deng J.M."/>
            <person name="Akiyama K."/>
            <person name="Ansari Y."/>
            <person name="Arakawa T."/>
            <person name="Banh J."/>
            <person name="Banno F."/>
            <person name="Bowser L."/>
            <person name="Brooks S.Y."/>
            <person name="Carninci P."/>
            <person name="Chao Q."/>
            <person name="Choy N."/>
            <person name="Enju A."/>
            <person name="Goldsmith A.D."/>
            <person name="Gurjal M."/>
            <person name="Hansen N.F."/>
            <person name="Hayashizaki Y."/>
            <person name="Johnson-Hopson C."/>
            <person name="Hsuan V.W."/>
            <person name="Iida K."/>
            <person name="Karnes M."/>
            <person name="Khan S."/>
            <person name="Koesema E."/>
            <person name="Ishida J."/>
            <person name="Jiang P.X."/>
            <person name="Jones T."/>
            <person name="Kawai J."/>
            <person name="Kamiya A."/>
            <person name="Meyers C."/>
            <person name="Nakajima M."/>
            <person name="Narusaka M."/>
            <person name="Seki M."/>
            <person name="Sakurai T."/>
            <person name="Satou M."/>
            <person name="Tamse R."/>
            <person name="Vaysberg M."/>
            <person name="Wallender E.K."/>
            <person name="Wong C."/>
            <person name="Yamamura Y."/>
            <person name="Yuan S."/>
            <person name="Shinozaki K."/>
            <person name="Davis R.W."/>
            <person name="Theologis A."/>
            <person name="Ecker J.R."/>
        </authorList>
    </citation>
    <scope>NUCLEOTIDE SEQUENCE [LARGE SCALE MRNA] (ISOFORM 1)</scope>
    <source>
        <strain>cv. Columbia</strain>
    </source>
</reference>
<reference key="5">
    <citation type="submission" date="2002-03" db="EMBL/GenBank/DDBJ databases">
        <title>Full-length cDNA from Arabidopsis thaliana.</title>
        <authorList>
            <person name="Brover V.V."/>
            <person name="Troukhan M.E."/>
            <person name="Alexandrov N.A."/>
            <person name="Lu Y.-P."/>
            <person name="Flavell R.B."/>
            <person name="Feldmann K.A."/>
        </authorList>
    </citation>
    <scope>NUCLEOTIDE SEQUENCE [LARGE SCALE MRNA] (ISOFORM 1)</scope>
</reference>
<reference key="6">
    <citation type="journal article" date="2000" name="Plant Physiol.">
        <title>Multiple signaling pathways in gene expression during sugar starvation. Pharmacological analysis of din gene expression in suspension-cultured cells of Arabidopsis.</title>
        <authorList>
            <person name="Fujiki Y."/>
            <person name="Ito M."/>
            <person name="Nishida I."/>
            <person name="Watanabe A."/>
        </authorList>
    </citation>
    <scope>INDUCTION</scope>
</reference>
<reference key="7">
    <citation type="journal article" date="2004" name="Plant Cell Physiol.">
        <title>The delayed leaf senescence mutants of Arabidopsis, ore1, ore3, and ore9 are tolerant to oxidative stress.</title>
        <authorList>
            <person name="Woo H.R."/>
            <person name="Kim J.H."/>
            <person name="Nam H.G."/>
            <person name="Lim P.O."/>
        </authorList>
    </citation>
    <scope>INDUCTION</scope>
</reference>
<reference key="8">
    <citation type="journal article" date="2004" name="Plant Physiol.">
        <title>Intracellular localization of Arabidopsis sulfurtransferases.</title>
        <authorList>
            <person name="Bauer M."/>
            <person name="Dietrich C."/>
            <person name="Nowak K."/>
            <person name="Sierralta W.D."/>
            <person name="Papenbrock J."/>
        </authorList>
    </citation>
    <scope>SUBCELLULAR LOCATION</scope>
</reference>
<reference key="9">
    <citation type="journal article" date="2005" name="Plant Physiol. Biochem.">
        <title>The SEN1 gene of Arabidopsis is regulated by signals that link plant defence responses and senescence.</title>
        <authorList>
            <person name="Schenk P.M."/>
            <person name="Kazan K."/>
            <person name="Rusu A.G."/>
            <person name="Manners J.M."/>
            <person name="Maclean D.J."/>
        </authorList>
    </citation>
    <scope>INDUCTION</scope>
</reference>
<reference key="10">
    <citation type="journal article" date="2007" name="Plant Physiol. Biochem.">
        <title>Differential expression of Arabidopsis sulfurtransferases under various growth conditions.</title>
        <authorList>
            <person name="Bartels A."/>
            <person name="Mock H.P."/>
            <person name="Papenbrock J."/>
        </authorList>
    </citation>
    <scope>GENE FAMILY</scope>
    <scope>NOMENCLATURE</scope>
</reference>
<reference key="11">
    <citation type="journal article" date="2010" name="Plant Mol. Biol.">
        <title>Nuclear targeted AtS40 modulates senescence associated gene expression in Arabidopsis thaliana during natural development and in darkness.</title>
        <authorList>
            <person name="Fischer-Kilbienski I."/>
            <person name="Miao Y."/>
            <person name="Roitsch T."/>
            <person name="Zschiesche W."/>
            <person name="Humbeck K."/>
            <person name="Krupinska K."/>
        </authorList>
    </citation>
    <scope>INDUCTION</scope>
</reference>
<evidence type="ECO:0000255" key="1">
    <source>
        <dbReference type="PROSITE-ProRule" id="PRU00173"/>
    </source>
</evidence>
<evidence type="ECO:0000269" key="2">
    <source>
    </source>
</evidence>
<evidence type="ECO:0000269" key="3">
    <source>
    </source>
</evidence>
<evidence type="ECO:0000269" key="4">
    <source>
    </source>
</evidence>
<evidence type="ECO:0000269" key="5">
    <source>
    </source>
</evidence>
<evidence type="ECO:0000269" key="6">
    <source>
    </source>
</evidence>
<evidence type="ECO:0000269" key="7">
    <source>
    </source>
</evidence>
<evidence type="ECO:0000305" key="8"/>
<keyword id="KW-0025">Alternative splicing</keyword>
<keyword id="KW-0150">Chloroplast</keyword>
<keyword id="KW-0934">Plastid</keyword>
<keyword id="KW-1185">Reference proteome</keyword>
<keyword id="KW-0793">Thylakoid</keyword>
<keyword id="KW-0809">Transit peptide</keyword>
<proteinExistence type="evidence at transcript level"/>